<proteinExistence type="inferred from homology"/>
<feature type="chain" id="PRO_1000141324" description="Small ribosomal subunit protein uS13">
    <location>
        <begin position="1"/>
        <end position="121"/>
    </location>
</feature>
<feature type="region of interest" description="Disordered" evidence="2">
    <location>
        <begin position="99"/>
        <end position="121"/>
    </location>
</feature>
<feature type="compositionally biased region" description="Basic residues" evidence="2">
    <location>
        <begin position="101"/>
        <end position="121"/>
    </location>
</feature>
<dbReference type="EMBL" id="CP001147">
    <property type="protein sequence ID" value="ACI20217.1"/>
    <property type="molecule type" value="Genomic_DNA"/>
</dbReference>
<dbReference type="RefSeq" id="WP_012544955.1">
    <property type="nucleotide sequence ID" value="NC_011296.1"/>
</dbReference>
<dbReference type="RefSeq" id="YP_002249223.1">
    <property type="nucleotide sequence ID" value="NC_011296.1"/>
</dbReference>
<dbReference type="SMR" id="B5YG25"/>
<dbReference type="FunCoup" id="B5YG25">
    <property type="interactions" value="487"/>
</dbReference>
<dbReference type="STRING" id="289376.THEYE_A1424"/>
<dbReference type="EnsemblBacteria" id="ACI20217">
    <property type="protein sequence ID" value="ACI20217"/>
    <property type="gene ID" value="THEYE_A1424"/>
</dbReference>
<dbReference type="KEGG" id="tye:THEYE_A1424"/>
<dbReference type="PATRIC" id="fig|289376.4.peg.1384"/>
<dbReference type="eggNOG" id="COG0099">
    <property type="taxonomic scope" value="Bacteria"/>
</dbReference>
<dbReference type="HOGENOM" id="CLU_103849_1_2_0"/>
<dbReference type="InParanoid" id="B5YG25"/>
<dbReference type="OrthoDB" id="9803610at2"/>
<dbReference type="Proteomes" id="UP000000718">
    <property type="component" value="Chromosome"/>
</dbReference>
<dbReference type="GO" id="GO:0005829">
    <property type="term" value="C:cytosol"/>
    <property type="evidence" value="ECO:0000318"/>
    <property type="project" value="GO_Central"/>
</dbReference>
<dbReference type="GO" id="GO:0015935">
    <property type="term" value="C:small ribosomal subunit"/>
    <property type="evidence" value="ECO:0000318"/>
    <property type="project" value="GO_Central"/>
</dbReference>
<dbReference type="GO" id="GO:0019843">
    <property type="term" value="F:rRNA binding"/>
    <property type="evidence" value="ECO:0007669"/>
    <property type="project" value="UniProtKB-UniRule"/>
</dbReference>
<dbReference type="GO" id="GO:0003735">
    <property type="term" value="F:structural constituent of ribosome"/>
    <property type="evidence" value="ECO:0007669"/>
    <property type="project" value="InterPro"/>
</dbReference>
<dbReference type="GO" id="GO:0000049">
    <property type="term" value="F:tRNA binding"/>
    <property type="evidence" value="ECO:0007669"/>
    <property type="project" value="UniProtKB-UniRule"/>
</dbReference>
<dbReference type="GO" id="GO:0006412">
    <property type="term" value="P:translation"/>
    <property type="evidence" value="ECO:0007669"/>
    <property type="project" value="UniProtKB-UniRule"/>
</dbReference>
<dbReference type="FunFam" id="1.10.8.50:FF:000001">
    <property type="entry name" value="30S ribosomal protein S13"/>
    <property type="match status" value="1"/>
</dbReference>
<dbReference type="FunFam" id="4.10.910.10:FF:000001">
    <property type="entry name" value="30S ribosomal protein S13"/>
    <property type="match status" value="1"/>
</dbReference>
<dbReference type="Gene3D" id="1.10.8.50">
    <property type="match status" value="1"/>
</dbReference>
<dbReference type="Gene3D" id="4.10.910.10">
    <property type="entry name" value="30s ribosomal protein s13, domain 2"/>
    <property type="match status" value="1"/>
</dbReference>
<dbReference type="HAMAP" id="MF_01315">
    <property type="entry name" value="Ribosomal_uS13"/>
    <property type="match status" value="1"/>
</dbReference>
<dbReference type="InterPro" id="IPR027437">
    <property type="entry name" value="Rbsml_uS13_C"/>
</dbReference>
<dbReference type="InterPro" id="IPR001892">
    <property type="entry name" value="Ribosomal_uS13"/>
</dbReference>
<dbReference type="InterPro" id="IPR010979">
    <property type="entry name" value="Ribosomal_uS13-like_H2TH"/>
</dbReference>
<dbReference type="InterPro" id="IPR019980">
    <property type="entry name" value="Ribosomal_uS13_bac-type"/>
</dbReference>
<dbReference type="InterPro" id="IPR018269">
    <property type="entry name" value="Ribosomal_uS13_CS"/>
</dbReference>
<dbReference type="NCBIfam" id="TIGR03631">
    <property type="entry name" value="uS13_bact"/>
    <property type="match status" value="1"/>
</dbReference>
<dbReference type="PANTHER" id="PTHR10871">
    <property type="entry name" value="30S RIBOSOMAL PROTEIN S13/40S RIBOSOMAL PROTEIN S18"/>
    <property type="match status" value="1"/>
</dbReference>
<dbReference type="PANTHER" id="PTHR10871:SF1">
    <property type="entry name" value="SMALL RIBOSOMAL SUBUNIT PROTEIN US13M"/>
    <property type="match status" value="1"/>
</dbReference>
<dbReference type="Pfam" id="PF00416">
    <property type="entry name" value="Ribosomal_S13"/>
    <property type="match status" value="1"/>
</dbReference>
<dbReference type="PIRSF" id="PIRSF002134">
    <property type="entry name" value="Ribosomal_S13"/>
    <property type="match status" value="1"/>
</dbReference>
<dbReference type="SUPFAM" id="SSF46946">
    <property type="entry name" value="S13-like H2TH domain"/>
    <property type="match status" value="1"/>
</dbReference>
<dbReference type="PROSITE" id="PS00646">
    <property type="entry name" value="RIBOSOMAL_S13_1"/>
    <property type="match status" value="1"/>
</dbReference>
<dbReference type="PROSITE" id="PS50159">
    <property type="entry name" value="RIBOSOMAL_S13_2"/>
    <property type="match status" value="1"/>
</dbReference>
<evidence type="ECO:0000255" key="1">
    <source>
        <dbReference type="HAMAP-Rule" id="MF_01315"/>
    </source>
</evidence>
<evidence type="ECO:0000256" key="2">
    <source>
        <dbReference type="SAM" id="MobiDB-lite"/>
    </source>
</evidence>
<evidence type="ECO:0000305" key="3"/>
<organism>
    <name type="scientific">Thermodesulfovibrio yellowstonii (strain ATCC 51303 / DSM 11347 / YP87)</name>
    <dbReference type="NCBI Taxonomy" id="289376"/>
    <lineage>
        <taxon>Bacteria</taxon>
        <taxon>Pseudomonadati</taxon>
        <taxon>Nitrospirota</taxon>
        <taxon>Thermodesulfovibrionia</taxon>
        <taxon>Thermodesulfovibrionales</taxon>
        <taxon>Thermodesulfovibrionaceae</taxon>
        <taxon>Thermodesulfovibrio</taxon>
    </lineage>
</organism>
<sequence>MARIAGVDIPKNERVEIGLTRIFGIGRSLSNKILKETGVEPNKRVKDLTDDEIVKIRSEIEKNYKVEGELRKEISMNIKRLMDIGCYRGLRHMANLPVRGQRTRTNSRTRKGPRRKIMKKK</sequence>
<accession>B5YG25</accession>
<comment type="function">
    <text evidence="1">Located at the top of the head of the 30S subunit, it contacts several helices of the 16S rRNA. In the 70S ribosome it contacts the 23S rRNA (bridge B1a) and protein L5 of the 50S subunit (bridge B1b), connecting the 2 subunits; these bridges are implicated in subunit movement. Contacts the tRNAs in the A and P-sites.</text>
</comment>
<comment type="subunit">
    <text evidence="1">Part of the 30S ribosomal subunit. Forms a loose heterodimer with protein S19. Forms two bridges to the 50S subunit in the 70S ribosome.</text>
</comment>
<comment type="similarity">
    <text evidence="1">Belongs to the universal ribosomal protein uS13 family.</text>
</comment>
<protein>
    <recommendedName>
        <fullName evidence="1">Small ribosomal subunit protein uS13</fullName>
    </recommendedName>
    <alternativeName>
        <fullName evidence="3">30S ribosomal protein S13</fullName>
    </alternativeName>
</protein>
<name>RS13_THEYD</name>
<gene>
    <name evidence="1" type="primary">rpsM</name>
    <name type="ordered locus">THEYE_A1424</name>
</gene>
<keyword id="KW-1185">Reference proteome</keyword>
<keyword id="KW-0687">Ribonucleoprotein</keyword>
<keyword id="KW-0689">Ribosomal protein</keyword>
<keyword id="KW-0694">RNA-binding</keyword>
<keyword id="KW-0699">rRNA-binding</keyword>
<keyword id="KW-0820">tRNA-binding</keyword>
<reference key="1">
    <citation type="submission" date="2008-08" db="EMBL/GenBank/DDBJ databases">
        <title>The complete genome sequence of Thermodesulfovibrio yellowstonii strain ATCC 51303 / DSM 11347 / YP87.</title>
        <authorList>
            <person name="Dodson R.J."/>
            <person name="Durkin A.S."/>
            <person name="Wu M."/>
            <person name="Eisen J."/>
            <person name="Sutton G."/>
        </authorList>
    </citation>
    <scope>NUCLEOTIDE SEQUENCE [LARGE SCALE GENOMIC DNA]</scope>
    <source>
        <strain>ATCC 51303 / DSM 11347 / YP87</strain>
    </source>
</reference>